<reference evidence="9" key="1">
    <citation type="journal article" date="2001" name="J. Bacteriol.">
        <title>Genome of the bacterium Streptococcus pneumoniae strain R6.</title>
        <authorList>
            <person name="Hoskins J."/>
            <person name="Alborn W.E. Jr."/>
            <person name="Arnold J."/>
            <person name="Blaszczak L.C."/>
            <person name="Burgett S."/>
            <person name="DeHoff B.S."/>
            <person name="Estrem S.T."/>
            <person name="Fritz L."/>
            <person name="Fu D.-J."/>
            <person name="Fuller W."/>
            <person name="Geringer C."/>
            <person name="Gilmour R."/>
            <person name="Glass J.S."/>
            <person name="Khoja H."/>
            <person name="Kraft A.R."/>
            <person name="Lagace R.E."/>
            <person name="LeBlanc D.J."/>
            <person name="Lee L.N."/>
            <person name="Lefkowitz E.J."/>
            <person name="Lu J."/>
            <person name="Matsushima P."/>
            <person name="McAhren S.M."/>
            <person name="McHenney M."/>
            <person name="McLeaster K."/>
            <person name="Mundy C.W."/>
            <person name="Nicas T.I."/>
            <person name="Norris F.H."/>
            <person name="O'Gara M."/>
            <person name="Peery R.B."/>
            <person name="Robertson G.T."/>
            <person name="Rockey P."/>
            <person name="Sun P.-M."/>
            <person name="Winkler M.E."/>
            <person name="Yang Y."/>
            <person name="Young-Bellido M."/>
            <person name="Zhao G."/>
            <person name="Zook C.A."/>
            <person name="Baltz R.H."/>
            <person name="Jaskunas S.R."/>
            <person name="Rosteck P.R. Jr."/>
            <person name="Skatrud P.L."/>
            <person name="Glass J.I."/>
        </authorList>
    </citation>
    <scope>NUCLEOTIDE SEQUENCE [LARGE SCALE GENOMIC DNA]</scope>
    <source>
        <strain evidence="9">ATCC BAA-255 / R6</strain>
    </source>
</reference>
<reference evidence="7" key="2">
    <citation type="journal article" date="2007" name="J. Bacteriol.">
        <title>RR06 activates transcription of spr1996 and cbpA in Streptococcus pneumoniae.</title>
        <authorList>
            <person name="Ma Z."/>
            <person name="Zhang J.R."/>
        </authorList>
    </citation>
    <scope>FUNCTION</scope>
    <scope>DISRUPTION PHENOTYPE</scope>
</reference>
<organism evidence="9">
    <name type="scientific">Streptococcus pneumoniae (strain ATCC BAA-255 / R6)</name>
    <dbReference type="NCBI Taxonomy" id="171101"/>
    <lineage>
        <taxon>Bacteria</taxon>
        <taxon>Bacillati</taxon>
        <taxon>Bacillota</taxon>
        <taxon>Bacilli</taxon>
        <taxon>Lactobacillales</taxon>
        <taxon>Streptococcaceae</taxon>
        <taxon>Streptococcus</taxon>
    </lineage>
</organism>
<protein>
    <recommendedName>
        <fullName evidence="7">Sensor histidine protein kinase HK06</fullName>
        <ecNumber evidence="1">2.7.13.3</ecNumber>
    </recommendedName>
</protein>
<name>HK06_STRR6</name>
<comment type="function">
    <text evidence="1 5">Member of the two-component regulatory system RR06/HK06 involved in regulation of target genes (By similarity). Has been shown in one study to not be required for regulation of expression of choline-binding protein CbpA (PubMed:17220227).</text>
</comment>
<comment type="catalytic activity">
    <reaction evidence="1">
        <text>ATP + protein L-histidine = ADP + protein N-phospho-L-histidine.</text>
        <dbReference type="EC" id="2.7.13.3"/>
    </reaction>
</comment>
<comment type="subcellular location">
    <subcellularLocation>
        <location evidence="7">Cell membrane</location>
        <topology evidence="2">Multi-pass membrane protein</topology>
    </subcellularLocation>
</comment>
<comment type="disruption phenotype">
    <text evidence="5">Expression of CbpA unaffected at protein level.</text>
</comment>
<comment type="miscellaneous">
    <text evidence="5">Probably part of an rr06-hk06 operon.</text>
</comment>
<keyword id="KW-0067">ATP-binding</keyword>
<keyword id="KW-1003">Cell membrane</keyword>
<keyword id="KW-0418">Kinase</keyword>
<keyword id="KW-0472">Membrane</keyword>
<keyword id="KW-0547">Nucleotide-binding</keyword>
<keyword id="KW-0597">Phosphoprotein</keyword>
<keyword id="KW-1185">Reference proteome</keyword>
<keyword id="KW-0808">Transferase</keyword>
<keyword id="KW-0812">Transmembrane</keyword>
<keyword id="KW-1133">Transmembrane helix</keyword>
<keyword id="KW-0902">Two-component regulatory system</keyword>
<proteinExistence type="inferred from homology"/>
<accession>Q8DN03</accession>
<dbReference type="EC" id="2.7.13.3" evidence="1"/>
<dbReference type="EMBL" id="AE007317">
    <property type="protein sequence ID" value="AAL00799.1"/>
    <property type="molecule type" value="Genomic_DNA"/>
</dbReference>
<dbReference type="PIR" id="B98121">
    <property type="entry name" value="B98121"/>
</dbReference>
<dbReference type="RefSeq" id="NP_359588.1">
    <property type="nucleotide sequence ID" value="NC_003098.1"/>
</dbReference>
<dbReference type="RefSeq" id="WP_000594665.1">
    <property type="nucleotide sequence ID" value="NC_003098.1"/>
</dbReference>
<dbReference type="SMR" id="Q8DN03"/>
<dbReference type="STRING" id="171101.spr1997"/>
<dbReference type="KEGG" id="spr:spr1997"/>
<dbReference type="PATRIC" id="fig|171101.6.peg.2161"/>
<dbReference type="eggNOG" id="COG0642">
    <property type="taxonomic scope" value="Bacteria"/>
</dbReference>
<dbReference type="eggNOG" id="COG3850">
    <property type="taxonomic scope" value="Bacteria"/>
</dbReference>
<dbReference type="HOGENOM" id="CLU_000445_89_6_9"/>
<dbReference type="BRENDA" id="2.7.13.3">
    <property type="organism ID" value="1960"/>
</dbReference>
<dbReference type="Proteomes" id="UP000000586">
    <property type="component" value="Chromosome"/>
</dbReference>
<dbReference type="GO" id="GO:0005886">
    <property type="term" value="C:plasma membrane"/>
    <property type="evidence" value="ECO:0000318"/>
    <property type="project" value="GO_Central"/>
</dbReference>
<dbReference type="GO" id="GO:0005524">
    <property type="term" value="F:ATP binding"/>
    <property type="evidence" value="ECO:0007669"/>
    <property type="project" value="UniProtKB-KW"/>
</dbReference>
<dbReference type="GO" id="GO:0000155">
    <property type="term" value="F:phosphorelay sensor kinase activity"/>
    <property type="evidence" value="ECO:0000318"/>
    <property type="project" value="GO_Central"/>
</dbReference>
<dbReference type="CDD" id="cd06225">
    <property type="entry name" value="HAMP"/>
    <property type="match status" value="1"/>
</dbReference>
<dbReference type="CDD" id="cd00075">
    <property type="entry name" value="HATPase"/>
    <property type="match status" value="1"/>
</dbReference>
<dbReference type="CDD" id="cd00082">
    <property type="entry name" value="HisKA"/>
    <property type="match status" value="1"/>
</dbReference>
<dbReference type="FunFam" id="3.30.565.10:FF:000124">
    <property type="entry name" value="Histidine kinase"/>
    <property type="match status" value="1"/>
</dbReference>
<dbReference type="Gene3D" id="1.10.287.130">
    <property type="match status" value="1"/>
</dbReference>
<dbReference type="Gene3D" id="6.10.340.10">
    <property type="match status" value="1"/>
</dbReference>
<dbReference type="Gene3D" id="3.30.565.10">
    <property type="entry name" value="Histidine kinase-like ATPase, C-terminal domain"/>
    <property type="match status" value="1"/>
</dbReference>
<dbReference type="InterPro" id="IPR050398">
    <property type="entry name" value="Bact_Sensor_His_Kinase"/>
</dbReference>
<dbReference type="InterPro" id="IPR003660">
    <property type="entry name" value="HAMP_dom"/>
</dbReference>
<dbReference type="InterPro" id="IPR036890">
    <property type="entry name" value="HATPase_C_sf"/>
</dbReference>
<dbReference type="InterPro" id="IPR005467">
    <property type="entry name" value="His_kinase_dom"/>
</dbReference>
<dbReference type="InterPro" id="IPR003661">
    <property type="entry name" value="HisK_dim/P_dom"/>
</dbReference>
<dbReference type="InterPro" id="IPR036097">
    <property type="entry name" value="HisK_dim/P_sf"/>
</dbReference>
<dbReference type="PANTHER" id="PTHR45528">
    <property type="entry name" value="SENSOR HISTIDINE KINASE CPXA"/>
    <property type="match status" value="1"/>
</dbReference>
<dbReference type="PANTHER" id="PTHR45528:SF1">
    <property type="entry name" value="SENSOR HISTIDINE KINASE CPXA"/>
    <property type="match status" value="1"/>
</dbReference>
<dbReference type="Pfam" id="PF00672">
    <property type="entry name" value="HAMP"/>
    <property type="match status" value="1"/>
</dbReference>
<dbReference type="Pfam" id="PF02518">
    <property type="entry name" value="HATPase_c"/>
    <property type="match status" value="1"/>
</dbReference>
<dbReference type="Pfam" id="PF00512">
    <property type="entry name" value="HisKA"/>
    <property type="match status" value="1"/>
</dbReference>
<dbReference type="SMART" id="SM00304">
    <property type="entry name" value="HAMP"/>
    <property type="match status" value="1"/>
</dbReference>
<dbReference type="SMART" id="SM00387">
    <property type="entry name" value="HATPase_c"/>
    <property type="match status" value="1"/>
</dbReference>
<dbReference type="SMART" id="SM00388">
    <property type="entry name" value="HisKA"/>
    <property type="match status" value="1"/>
</dbReference>
<dbReference type="SUPFAM" id="SSF55874">
    <property type="entry name" value="ATPase domain of HSP90 chaperone/DNA topoisomerase II/histidine kinase"/>
    <property type="match status" value="1"/>
</dbReference>
<dbReference type="SUPFAM" id="SSF158472">
    <property type="entry name" value="HAMP domain-like"/>
    <property type="match status" value="1"/>
</dbReference>
<dbReference type="SUPFAM" id="SSF47384">
    <property type="entry name" value="Homodimeric domain of signal transducing histidine kinase"/>
    <property type="match status" value="1"/>
</dbReference>
<dbReference type="PROSITE" id="PS50885">
    <property type="entry name" value="HAMP"/>
    <property type="match status" value="1"/>
</dbReference>
<dbReference type="PROSITE" id="PS50109">
    <property type="entry name" value="HIS_KIN"/>
    <property type="match status" value="1"/>
</dbReference>
<sequence>MIKNPKLLTKSFLRSFAILGGVGLVIHIAIYLTFPFYYIQLEGEKFNESARVFTEYLKTKTSDEIPSLLQSYSKSLTISAHLKRDIVDKRLPLVHDLDIKDGKLSNYIVMLDMSVSTADGKQVTVQFVHGVDVYKEAKNILLLYLPYTFLVTIAFSFVFSYFYTKRLLNPLFYISEVTSKMQDLDDNIRFDESRKDEVGEVGKQINGMYEHLLKVIHELESRNEQIVKLQNQKVSFVRGASHELKTPLASLRIILENMQHNIGDYKDHPKYIAKSINKIDQMSHLLEEVLESSKFQEWTECRETLTVKPVLVDILSRYQELAHSIGVTIENQLTDATRVVMSLRALDKVLTNLISNAIKYSDKNGRVIISEQDGYLSIKNTCAPLSDQELEHLFDIFYHSQIVTDKDESSGLGLYIVNNILESYQMDYSFLPYEHGMEFKISL</sequence>
<gene>
    <name evidence="6" type="primary">hk06</name>
    <name evidence="8" type="ordered locus">spr1997</name>
</gene>
<feature type="chain" id="PRO_0000459071" description="Sensor histidine protein kinase HK06">
    <location>
        <begin position="1"/>
        <end position="443"/>
    </location>
</feature>
<feature type="transmembrane region" description="Helical" evidence="2">
    <location>
        <begin position="16"/>
        <end position="36"/>
    </location>
</feature>
<feature type="transmembrane region" description="Helical" evidence="2">
    <location>
        <begin position="140"/>
        <end position="160"/>
    </location>
</feature>
<feature type="domain" description="HAMP" evidence="3">
    <location>
        <begin position="165"/>
        <end position="217"/>
    </location>
</feature>
<feature type="domain" description="Histidine kinase" evidence="4">
    <location>
        <begin position="239"/>
        <end position="443"/>
    </location>
</feature>
<feature type="modified residue" description="Phosphohistidine; by autocatalysis" evidence="4">
    <location>
        <position position="242"/>
    </location>
</feature>
<evidence type="ECO:0000250" key="1">
    <source>
        <dbReference type="UniProtKB" id="O34206"/>
    </source>
</evidence>
<evidence type="ECO:0000255" key="2"/>
<evidence type="ECO:0000255" key="3">
    <source>
        <dbReference type="PROSITE-ProRule" id="PRU00102"/>
    </source>
</evidence>
<evidence type="ECO:0000255" key="4">
    <source>
        <dbReference type="PROSITE-ProRule" id="PRU00107"/>
    </source>
</evidence>
<evidence type="ECO:0000269" key="5">
    <source>
    </source>
</evidence>
<evidence type="ECO:0000303" key="6">
    <source>
    </source>
</evidence>
<evidence type="ECO:0000305" key="7"/>
<evidence type="ECO:0000312" key="8">
    <source>
        <dbReference type="EMBL" id="AAL00799.1"/>
    </source>
</evidence>
<evidence type="ECO:0000312" key="9">
    <source>
        <dbReference type="Proteomes" id="UP000000586"/>
    </source>
</evidence>